<protein>
    <recommendedName>
        <fullName evidence="1">S-ribosylhomocysteine lyase</fullName>
        <ecNumber evidence="1">4.4.1.21</ecNumber>
    </recommendedName>
    <alternativeName>
        <fullName evidence="1">AI-2 synthesis protein</fullName>
    </alternativeName>
    <alternativeName>
        <fullName evidence="1">Autoinducer-2 production protein LuxS</fullName>
    </alternativeName>
</protein>
<gene>
    <name evidence="1" type="primary">luxS</name>
    <name type="ordered locus">HPSH_00525</name>
</gene>
<dbReference type="EC" id="4.4.1.21" evidence="1"/>
<dbReference type="EMBL" id="CP001072">
    <property type="protein sequence ID" value="ACD47567.1"/>
    <property type="molecule type" value="Genomic_DNA"/>
</dbReference>
<dbReference type="RefSeq" id="WP_000856640.1">
    <property type="nucleotide sequence ID" value="NC_010698.2"/>
</dbReference>
<dbReference type="SMR" id="B2URT5"/>
<dbReference type="KEGG" id="hps:HPSH_00525"/>
<dbReference type="HOGENOM" id="CLU_107531_2_0_7"/>
<dbReference type="GO" id="GO:0005506">
    <property type="term" value="F:iron ion binding"/>
    <property type="evidence" value="ECO:0007669"/>
    <property type="project" value="InterPro"/>
</dbReference>
<dbReference type="GO" id="GO:0043768">
    <property type="term" value="F:S-ribosylhomocysteine lyase activity"/>
    <property type="evidence" value="ECO:0007669"/>
    <property type="project" value="UniProtKB-UniRule"/>
</dbReference>
<dbReference type="GO" id="GO:0009372">
    <property type="term" value="P:quorum sensing"/>
    <property type="evidence" value="ECO:0007669"/>
    <property type="project" value="UniProtKB-UniRule"/>
</dbReference>
<dbReference type="Gene3D" id="3.30.1360.80">
    <property type="entry name" value="S-ribosylhomocysteinase (LuxS)"/>
    <property type="match status" value="1"/>
</dbReference>
<dbReference type="HAMAP" id="MF_00091">
    <property type="entry name" value="LuxS"/>
    <property type="match status" value="1"/>
</dbReference>
<dbReference type="InterPro" id="IPR037005">
    <property type="entry name" value="LuxS_sf"/>
</dbReference>
<dbReference type="InterPro" id="IPR011249">
    <property type="entry name" value="Metalloenz_LuxS/M16"/>
</dbReference>
<dbReference type="InterPro" id="IPR003815">
    <property type="entry name" value="S-ribosylhomocysteinase"/>
</dbReference>
<dbReference type="NCBIfam" id="NF002604">
    <property type="entry name" value="PRK02260.1-4"/>
    <property type="match status" value="1"/>
</dbReference>
<dbReference type="PANTHER" id="PTHR35799">
    <property type="entry name" value="S-RIBOSYLHOMOCYSTEINE LYASE"/>
    <property type="match status" value="1"/>
</dbReference>
<dbReference type="PANTHER" id="PTHR35799:SF1">
    <property type="entry name" value="S-RIBOSYLHOMOCYSTEINE LYASE"/>
    <property type="match status" value="1"/>
</dbReference>
<dbReference type="Pfam" id="PF02664">
    <property type="entry name" value="LuxS"/>
    <property type="match status" value="1"/>
</dbReference>
<dbReference type="PIRSF" id="PIRSF006160">
    <property type="entry name" value="AI2"/>
    <property type="match status" value="1"/>
</dbReference>
<dbReference type="PRINTS" id="PR01487">
    <property type="entry name" value="LUXSPROTEIN"/>
</dbReference>
<dbReference type="SUPFAM" id="SSF63411">
    <property type="entry name" value="LuxS/MPP-like metallohydrolase"/>
    <property type="match status" value="1"/>
</dbReference>
<feature type="chain" id="PRO_1000093311" description="S-ribosylhomocysteine lyase">
    <location>
        <begin position="1"/>
        <end position="155"/>
    </location>
</feature>
<feature type="binding site" evidence="1">
    <location>
        <position position="58"/>
    </location>
    <ligand>
        <name>Fe cation</name>
        <dbReference type="ChEBI" id="CHEBI:24875"/>
    </ligand>
</feature>
<feature type="binding site" evidence="1">
    <location>
        <position position="62"/>
    </location>
    <ligand>
        <name>Fe cation</name>
        <dbReference type="ChEBI" id="CHEBI:24875"/>
    </ligand>
</feature>
<feature type="binding site" evidence="1">
    <location>
        <position position="125"/>
    </location>
    <ligand>
        <name>Fe cation</name>
        <dbReference type="ChEBI" id="CHEBI:24875"/>
    </ligand>
</feature>
<accession>B2URT5</accession>
<evidence type="ECO:0000255" key="1">
    <source>
        <dbReference type="HAMAP-Rule" id="MF_00091"/>
    </source>
</evidence>
<organism>
    <name type="scientific">Helicobacter pylori (strain Shi470)</name>
    <dbReference type="NCBI Taxonomy" id="512562"/>
    <lineage>
        <taxon>Bacteria</taxon>
        <taxon>Pseudomonadati</taxon>
        <taxon>Campylobacterota</taxon>
        <taxon>Epsilonproteobacteria</taxon>
        <taxon>Campylobacterales</taxon>
        <taxon>Helicobacteraceae</taxon>
        <taxon>Helicobacter</taxon>
    </lineage>
</organism>
<sequence length="155" mass="17696">MKTPKMNVESFNLDHTKVKAPYVRIADRKKGVNGDLIVKYDVRFKQPNKDHMDMPSLHSLEHLVAEIIRNHASYVIDWSPMGCQTGFYLTVLNHDNYTEILEILEKTMQDVLKATEVPASNEKQCGWAANHTLEGAQNLARAFLDKRAEWSEVGV</sequence>
<reference key="1">
    <citation type="submission" date="2008-05" db="EMBL/GenBank/DDBJ databases">
        <title>Genome sequence of Helicobacter pylori from the remote Amazon: traces of Asian ancestry of the first Americans.</title>
        <authorList>
            <person name="Kersulyte D."/>
            <person name="Kalia A."/>
            <person name="Gilman R.H."/>
            <person name="Berg D.E."/>
        </authorList>
    </citation>
    <scope>NUCLEOTIDE SEQUENCE [LARGE SCALE GENOMIC DNA]</scope>
    <source>
        <strain>Shi470</strain>
    </source>
</reference>
<name>LUXS_HELPS</name>
<proteinExistence type="inferred from homology"/>
<comment type="function">
    <text evidence="1">Involved in the synthesis of autoinducer 2 (AI-2) which is secreted by bacteria and is used to communicate both the cell density and the metabolic potential of the environment. The regulation of gene expression in response to changes in cell density is called quorum sensing. Catalyzes the transformation of S-ribosylhomocysteine (RHC) to homocysteine (HC) and 4,5-dihydroxy-2,3-pentadione (DPD).</text>
</comment>
<comment type="catalytic activity">
    <reaction evidence="1">
        <text>S-(5-deoxy-D-ribos-5-yl)-L-homocysteine = (S)-4,5-dihydroxypentane-2,3-dione + L-homocysteine</text>
        <dbReference type="Rhea" id="RHEA:17753"/>
        <dbReference type="ChEBI" id="CHEBI:29484"/>
        <dbReference type="ChEBI" id="CHEBI:58195"/>
        <dbReference type="ChEBI" id="CHEBI:58199"/>
        <dbReference type="EC" id="4.4.1.21"/>
    </reaction>
</comment>
<comment type="cofactor">
    <cofactor evidence="1">
        <name>Fe cation</name>
        <dbReference type="ChEBI" id="CHEBI:24875"/>
    </cofactor>
    <text evidence="1">Binds 1 Fe cation per subunit.</text>
</comment>
<comment type="subunit">
    <text evidence="1">Homodimer.</text>
</comment>
<comment type="similarity">
    <text evidence="1">Belongs to the LuxS family.</text>
</comment>
<keyword id="KW-0071">Autoinducer synthesis</keyword>
<keyword id="KW-0408">Iron</keyword>
<keyword id="KW-0456">Lyase</keyword>
<keyword id="KW-0479">Metal-binding</keyword>
<keyword id="KW-0673">Quorum sensing</keyword>